<organism>
    <name type="scientific">Carassius auratus</name>
    <name type="common">Goldfish</name>
    <dbReference type="NCBI Taxonomy" id="7957"/>
    <lineage>
        <taxon>Eukaryota</taxon>
        <taxon>Metazoa</taxon>
        <taxon>Chordata</taxon>
        <taxon>Craniata</taxon>
        <taxon>Vertebrata</taxon>
        <taxon>Euteleostomi</taxon>
        <taxon>Actinopterygii</taxon>
        <taxon>Neopterygii</taxon>
        <taxon>Teleostei</taxon>
        <taxon>Ostariophysi</taxon>
        <taxon>Cypriniformes</taxon>
        <taxon>Cyprinidae</taxon>
        <taxon>Cyprininae</taxon>
        <taxon>Carassius</taxon>
    </lineage>
</organism>
<feature type="chain" id="PRO_0000052912" description="Hemoglobin subunit beta">
    <location>
        <begin position="1"/>
        <end position="147"/>
    </location>
</feature>
<feature type="domain" description="Globin" evidence="1">
    <location>
        <begin position="2"/>
        <end position="147"/>
    </location>
</feature>
<feature type="binding site" description="distal binding residue">
    <location>
        <position position="63"/>
    </location>
    <ligand>
        <name>heme b</name>
        <dbReference type="ChEBI" id="CHEBI:60344"/>
    </ligand>
    <ligandPart>
        <name>Fe</name>
        <dbReference type="ChEBI" id="CHEBI:18248"/>
    </ligandPart>
</feature>
<feature type="binding site" description="proximal binding residue">
    <location>
        <position position="92"/>
    </location>
    <ligand>
        <name>heme b</name>
        <dbReference type="ChEBI" id="CHEBI:60344"/>
    </ligand>
    <ligandPart>
        <name>Fe</name>
        <dbReference type="ChEBI" id="CHEBI:18248"/>
    </ligandPart>
</feature>
<name>HBB_CARAU</name>
<keyword id="KW-0903">Direct protein sequencing</keyword>
<keyword id="KW-0349">Heme</keyword>
<keyword id="KW-0408">Iron</keyword>
<keyword id="KW-0479">Metal-binding</keyword>
<keyword id="KW-0561">Oxygen transport</keyword>
<keyword id="KW-1185">Reference proteome</keyword>
<keyword id="KW-0813">Transport</keyword>
<sequence length="147" mass="16210">VEWTDAERSAIIGLWGKLNPDELGPQALARCLIVYPWTQRYFATFGNLSSPAAIMGNPKVAAHGRTVMGGLERAIKNMDNIKATYAPLSVMHSEKLHVDPDNFRLLADCITVCAAMKFGPSGFNADVQEAWQKFLSVVVSALCRQYH</sequence>
<gene>
    <name type="primary">hbb</name>
</gene>
<evidence type="ECO:0000255" key="1">
    <source>
        <dbReference type="PROSITE-ProRule" id="PRU00238"/>
    </source>
</evidence>
<dbReference type="PIR" id="A02460">
    <property type="entry name" value="HBGY"/>
</dbReference>
<dbReference type="SMR" id="P02140"/>
<dbReference type="Proteomes" id="UP000515129">
    <property type="component" value="Unplaced"/>
</dbReference>
<dbReference type="GO" id="GO:0072562">
    <property type="term" value="C:blood microparticle"/>
    <property type="evidence" value="ECO:0007669"/>
    <property type="project" value="TreeGrafter"/>
</dbReference>
<dbReference type="GO" id="GO:0031838">
    <property type="term" value="C:haptoglobin-hemoglobin complex"/>
    <property type="evidence" value="ECO:0007669"/>
    <property type="project" value="TreeGrafter"/>
</dbReference>
<dbReference type="GO" id="GO:0005833">
    <property type="term" value="C:hemoglobin complex"/>
    <property type="evidence" value="ECO:0007669"/>
    <property type="project" value="InterPro"/>
</dbReference>
<dbReference type="GO" id="GO:0031720">
    <property type="term" value="F:haptoglobin binding"/>
    <property type="evidence" value="ECO:0007669"/>
    <property type="project" value="TreeGrafter"/>
</dbReference>
<dbReference type="GO" id="GO:0020037">
    <property type="term" value="F:heme binding"/>
    <property type="evidence" value="ECO:0007669"/>
    <property type="project" value="InterPro"/>
</dbReference>
<dbReference type="GO" id="GO:0046872">
    <property type="term" value="F:metal ion binding"/>
    <property type="evidence" value="ECO:0007669"/>
    <property type="project" value="UniProtKB-KW"/>
</dbReference>
<dbReference type="GO" id="GO:0043177">
    <property type="term" value="F:organic acid binding"/>
    <property type="evidence" value="ECO:0007669"/>
    <property type="project" value="TreeGrafter"/>
</dbReference>
<dbReference type="GO" id="GO:0019825">
    <property type="term" value="F:oxygen binding"/>
    <property type="evidence" value="ECO:0007669"/>
    <property type="project" value="InterPro"/>
</dbReference>
<dbReference type="GO" id="GO:0005344">
    <property type="term" value="F:oxygen carrier activity"/>
    <property type="evidence" value="ECO:0007669"/>
    <property type="project" value="UniProtKB-KW"/>
</dbReference>
<dbReference type="GO" id="GO:0004601">
    <property type="term" value="F:peroxidase activity"/>
    <property type="evidence" value="ECO:0007669"/>
    <property type="project" value="TreeGrafter"/>
</dbReference>
<dbReference type="GO" id="GO:0042744">
    <property type="term" value="P:hydrogen peroxide catabolic process"/>
    <property type="evidence" value="ECO:0007669"/>
    <property type="project" value="TreeGrafter"/>
</dbReference>
<dbReference type="CDD" id="cd08925">
    <property type="entry name" value="Hb-beta-like"/>
    <property type="match status" value="1"/>
</dbReference>
<dbReference type="FunFam" id="1.10.490.10:FF:000001">
    <property type="entry name" value="Hemoglobin subunit beta"/>
    <property type="match status" value="1"/>
</dbReference>
<dbReference type="Gene3D" id="1.10.490.10">
    <property type="entry name" value="Globins"/>
    <property type="match status" value="1"/>
</dbReference>
<dbReference type="InterPro" id="IPR000971">
    <property type="entry name" value="Globin"/>
</dbReference>
<dbReference type="InterPro" id="IPR009050">
    <property type="entry name" value="Globin-like_sf"/>
</dbReference>
<dbReference type="InterPro" id="IPR012292">
    <property type="entry name" value="Globin/Proto"/>
</dbReference>
<dbReference type="InterPro" id="IPR002337">
    <property type="entry name" value="Hemoglobin_b"/>
</dbReference>
<dbReference type="InterPro" id="IPR050056">
    <property type="entry name" value="Hemoglobin_oxygen_transport"/>
</dbReference>
<dbReference type="PANTHER" id="PTHR11442">
    <property type="entry name" value="HEMOGLOBIN FAMILY MEMBER"/>
    <property type="match status" value="1"/>
</dbReference>
<dbReference type="PANTHER" id="PTHR11442:SF102">
    <property type="entry name" value="HEMOGLOBIN SUBUNIT BETA-1-RELATED"/>
    <property type="match status" value="1"/>
</dbReference>
<dbReference type="Pfam" id="PF00042">
    <property type="entry name" value="Globin"/>
    <property type="match status" value="1"/>
</dbReference>
<dbReference type="PRINTS" id="PR00814">
    <property type="entry name" value="BETAHAEM"/>
</dbReference>
<dbReference type="SUPFAM" id="SSF46458">
    <property type="entry name" value="Globin-like"/>
    <property type="match status" value="1"/>
</dbReference>
<dbReference type="PROSITE" id="PS01033">
    <property type="entry name" value="GLOBIN"/>
    <property type="match status" value="1"/>
</dbReference>
<proteinExistence type="evidence at protein level"/>
<comment type="function">
    <text>Involved in oxygen transport from gills to the various peripheral tissues.</text>
</comment>
<comment type="subunit">
    <text>Heterotetramer of two alpha chains and two beta chains.</text>
</comment>
<comment type="tissue specificity">
    <text>Red blood cells.</text>
</comment>
<comment type="similarity">
    <text evidence="1">Belongs to the globin family.</text>
</comment>
<accession>P02140</accession>
<protein>
    <recommendedName>
        <fullName>Hemoglobin subunit beta</fullName>
    </recommendedName>
    <alternativeName>
        <fullName>Beta-globin</fullName>
    </alternativeName>
    <alternativeName>
        <fullName>Hemoglobin beta chain</fullName>
    </alternativeName>
</protein>
<reference key="1">
    <citation type="journal article" date="1984" name="Hoppe-Seyler's Z. Physiol. Chem.">
        <title>The primary structure of hemoglobin from goldfish (Carassius auratus).</title>
        <authorList>
            <person name="Rodewald K."/>
            <person name="Braunitzer G."/>
        </authorList>
    </citation>
    <scope>PROTEIN SEQUENCE</scope>
</reference>